<evidence type="ECO:0000255" key="1">
    <source>
        <dbReference type="HAMAP-Rule" id="MF_01345"/>
    </source>
</evidence>
<evidence type="ECO:0000305" key="2"/>
<feature type="chain" id="PRO_1000054966" description="Small ribosomal subunit protein uS17">
    <location>
        <begin position="1"/>
        <end position="88"/>
    </location>
</feature>
<protein>
    <recommendedName>
        <fullName evidence="1">Small ribosomal subunit protein uS17</fullName>
    </recommendedName>
    <alternativeName>
        <fullName evidence="2">30S ribosomal protein S17</fullName>
    </alternativeName>
</protein>
<organism>
    <name type="scientific">Levilactobacillus brevis (strain ATCC 367 / BCRC 12310 / CIP 105137 / JCM 1170 / LMG 11437 / NCIMB 947 / NCTC 947)</name>
    <name type="common">Lactobacillus brevis</name>
    <dbReference type="NCBI Taxonomy" id="387344"/>
    <lineage>
        <taxon>Bacteria</taxon>
        <taxon>Bacillati</taxon>
        <taxon>Bacillota</taxon>
        <taxon>Bacilli</taxon>
        <taxon>Lactobacillales</taxon>
        <taxon>Lactobacillaceae</taxon>
        <taxon>Levilactobacillus</taxon>
    </lineage>
</organism>
<name>RS17_LEVBA</name>
<gene>
    <name evidence="1" type="primary">rpsQ</name>
    <name type="ordered locus">LVIS_1681</name>
</gene>
<comment type="function">
    <text evidence="1">One of the primary rRNA binding proteins, it binds specifically to the 5'-end of 16S ribosomal RNA.</text>
</comment>
<comment type="subunit">
    <text evidence="1">Part of the 30S ribosomal subunit.</text>
</comment>
<comment type="similarity">
    <text evidence="1">Belongs to the universal ribosomal protein uS17 family.</text>
</comment>
<accession>Q03PW6</accession>
<sequence>MSDARNNRKVYRGRVVSDKMDKTITVVVETTKTDARYGKRVKYSKKYKAHDENGEAHTGDIVEIMETRPLSATKRFRLVDIVEKAVII</sequence>
<keyword id="KW-1185">Reference proteome</keyword>
<keyword id="KW-0687">Ribonucleoprotein</keyword>
<keyword id="KW-0689">Ribosomal protein</keyword>
<keyword id="KW-0694">RNA-binding</keyword>
<keyword id="KW-0699">rRNA-binding</keyword>
<proteinExistence type="inferred from homology"/>
<reference key="1">
    <citation type="journal article" date="2006" name="Proc. Natl. Acad. Sci. U.S.A.">
        <title>Comparative genomics of the lactic acid bacteria.</title>
        <authorList>
            <person name="Makarova K.S."/>
            <person name="Slesarev A."/>
            <person name="Wolf Y.I."/>
            <person name="Sorokin A."/>
            <person name="Mirkin B."/>
            <person name="Koonin E.V."/>
            <person name="Pavlov A."/>
            <person name="Pavlova N."/>
            <person name="Karamychev V."/>
            <person name="Polouchine N."/>
            <person name="Shakhova V."/>
            <person name="Grigoriev I."/>
            <person name="Lou Y."/>
            <person name="Rohksar D."/>
            <person name="Lucas S."/>
            <person name="Huang K."/>
            <person name="Goodstein D.M."/>
            <person name="Hawkins T."/>
            <person name="Plengvidhya V."/>
            <person name="Welker D."/>
            <person name="Hughes J."/>
            <person name="Goh Y."/>
            <person name="Benson A."/>
            <person name="Baldwin K."/>
            <person name="Lee J.-H."/>
            <person name="Diaz-Muniz I."/>
            <person name="Dosti B."/>
            <person name="Smeianov V."/>
            <person name="Wechter W."/>
            <person name="Barabote R."/>
            <person name="Lorca G."/>
            <person name="Altermann E."/>
            <person name="Barrangou R."/>
            <person name="Ganesan B."/>
            <person name="Xie Y."/>
            <person name="Rawsthorne H."/>
            <person name="Tamir D."/>
            <person name="Parker C."/>
            <person name="Breidt F."/>
            <person name="Broadbent J.R."/>
            <person name="Hutkins R."/>
            <person name="O'Sullivan D."/>
            <person name="Steele J."/>
            <person name="Unlu G."/>
            <person name="Saier M.H. Jr."/>
            <person name="Klaenhammer T."/>
            <person name="Richardson P."/>
            <person name="Kozyavkin S."/>
            <person name="Weimer B.C."/>
            <person name="Mills D.A."/>
        </authorList>
    </citation>
    <scope>NUCLEOTIDE SEQUENCE [LARGE SCALE GENOMIC DNA]</scope>
    <source>
        <strain>ATCC 367 / BCRC 12310 / CIP 105137 / JCM 1170 / LMG 11437 / NCIMB 947 / NCTC 947</strain>
    </source>
</reference>
<dbReference type="EMBL" id="CP000416">
    <property type="protein sequence ID" value="ABJ64756.1"/>
    <property type="molecule type" value="Genomic_DNA"/>
</dbReference>
<dbReference type="RefSeq" id="WP_011668490.1">
    <property type="nucleotide sequence ID" value="NC_008497.1"/>
</dbReference>
<dbReference type="SMR" id="Q03PW6"/>
<dbReference type="STRING" id="387344.LVIS_1681"/>
<dbReference type="GeneID" id="56993542"/>
<dbReference type="KEGG" id="lbr:LVIS_1681"/>
<dbReference type="eggNOG" id="COG0186">
    <property type="taxonomic scope" value="Bacteria"/>
</dbReference>
<dbReference type="HOGENOM" id="CLU_073626_1_0_9"/>
<dbReference type="Proteomes" id="UP000001652">
    <property type="component" value="Chromosome"/>
</dbReference>
<dbReference type="GO" id="GO:0022627">
    <property type="term" value="C:cytosolic small ribosomal subunit"/>
    <property type="evidence" value="ECO:0007669"/>
    <property type="project" value="TreeGrafter"/>
</dbReference>
<dbReference type="GO" id="GO:0019843">
    <property type="term" value="F:rRNA binding"/>
    <property type="evidence" value="ECO:0007669"/>
    <property type="project" value="UniProtKB-UniRule"/>
</dbReference>
<dbReference type="GO" id="GO:0003735">
    <property type="term" value="F:structural constituent of ribosome"/>
    <property type="evidence" value="ECO:0007669"/>
    <property type="project" value="InterPro"/>
</dbReference>
<dbReference type="GO" id="GO:0006412">
    <property type="term" value="P:translation"/>
    <property type="evidence" value="ECO:0007669"/>
    <property type="project" value="UniProtKB-UniRule"/>
</dbReference>
<dbReference type="CDD" id="cd00364">
    <property type="entry name" value="Ribosomal_uS17"/>
    <property type="match status" value="1"/>
</dbReference>
<dbReference type="FunFam" id="2.40.50.140:FF:000026">
    <property type="entry name" value="30S ribosomal protein S17"/>
    <property type="match status" value="1"/>
</dbReference>
<dbReference type="Gene3D" id="2.40.50.140">
    <property type="entry name" value="Nucleic acid-binding proteins"/>
    <property type="match status" value="1"/>
</dbReference>
<dbReference type="HAMAP" id="MF_01345_B">
    <property type="entry name" value="Ribosomal_uS17_B"/>
    <property type="match status" value="1"/>
</dbReference>
<dbReference type="InterPro" id="IPR012340">
    <property type="entry name" value="NA-bd_OB-fold"/>
</dbReference>
<dbReference type="InterPro" id="IPR000266">
    <property type="entry name" value="Ribosomal_uS17"/>
</dbReference>
<dbReference type="InterPro" id="IPR019984">
    <property type="entry name" value="Ribosomal_uS17_bact/chlr"/>
</dbReference>
<dbReference type="InterPro" id="IPR019979">
    <property type="entry name" value="Ribosomal_uS17_CS"/>
</dbReference>
<dbReference type="NCBIfam" id="NF004123">
    <property type="entry name" value="PRK05610.1"/>
    <property type="match status" value="1"/>
</dbReference>
<dbReference type="NCBIfam" id="TIGR03635">
    <property type="entry name" value="uS17_bact"/>
    <property type="match status" value="1"/>
</dbReference>
<dbReference type="PANTHER" id="PTHR10744">
    <property type="entry name" value="40S RIBOSOMAL PROTEIN S11 FAMILY MEMBER"/>
    <property type="match status" value="1"/>
</dbReference>
<dbReference type="PANTHER" id="PTHR10744:SF1">
    <property type="entry name" value="SMALL RIBOSOMAL SUBUNIT PROTEIN US17M"/>
    <property type="match status" value="1"/>
</dbReference>
<dbReference type="Pfam" id="PF00366">
    <property type="entry name" value="Ribosomal_S17"/>
    <property type="match status" value="1"/>
</dbReference>
<dbReference type="PRINTS" id="PR00973">
    <property type="entry name" value="RIBOSOMALS17"/>
</dbReference>
<dbReference type="SUPFAM" id="SSF50249">
    <property type="entry name" value="Nucleic acid-binding proteins"/>
    <property type="match status" value="1"/>
</dbReference>
<dbReference type="PROSITE" id="PS00056">
    <property type="entry name" value="RIBOSOMAL_S17"/>
    <property type="match status" value="1"/>
</dbReference>